<protein>
    <recommendedName>
        <fullName>Uncharacterized protein YbdM</fullName>
    </recommendedName>
</protein>
<proteinExistence type="evidence at protein level"/>
<reference key="1">
    <citation type="journal article" date="1996" name="DNA Res.">
        <title>A 718-kb DNA sequence of the Escherichia coli K-12 genome corresponding to the 12.7-28.0 min region on the linkage map.</title>
        <authorList>
            <person name="Oshima T."/>
            <person name="Aiba H."/>
            <person name="Baba T."/>
            <person name="Fujita K."/>
            <person name="Hayashi K."/>
            <person name="Honjo A."/>
            <person name="Ikemoto K."/>
            <person name="Inada T."/>
            <person name="Itoh T."/>
            <person name="Kajihara M."/>
            <person name="Kanai K."/>
            <person name="Kashimoto K."/>
            <person name="Kimura S."/>
            <person name="Kitagawa M."/>
            <person name="Makino K."/>
            <person name="Masuda S."/>
            <person name="Miki T."/>
            <person name="Mizobuchi K."/>
            <person name="Mori H."/>
            <person name="Motomura K."/>
            <person name="Nakamura Y."/>
            <person name="Nashimoto H."/>
            <person name="Nishio Y."/>
            <person name="Saito N."/>
            <person name="Sampei G."/>
            <person name="Seki Y."/>
            <person name="Tagami H."/>
            <person name="Takemoto K."/>
            <person name="Wada C."/>
            <person name="Yamamoto Y."/>
            <person name="Yano M."/>
            <person name="Horiuchi T."/>
        </authorList>
    </citation>
    <scope>NUCLEOTIDE SEQUENCE [LARGE SCALE GENOMIC DNA]</scope>
    <source>
        <strain>K12 / W3110 / ATCC 27325 / DSM 5911</strain>
    </source>
</reference>
<reference key="2">
    <citation type="submission" date="1997-01" db="EMBL/GenBank/DDBJ databases">
        <title>Sequence of minutes 4-25 of Escherichia coli.</title>
        <authorList>
            <person name="Chung E."/>
            <person name="Allen E."/>
            <person name="Araujo R."/>
            <person name="Aparicio A.M."/>
            <person name="Davis K."/>
            <person name="Duncan M."/>
            <person name="Federspiel N."/>
            <person name="Hyman R."/>
            <person name="Kalman S."/>
            <person name="Komp C."/>
            <person name="Kurdi O."/>
            <person name="Lew H."/>
            <person name="Lin D."/>
            <person name="Namath A."/>
            <person name="Oefner P."/>
            <person name="Roberts D."/>
            <person name="Schramm S."/>
            <person name="Davis R.W."/>
        </authorList>
    </citation>
    <scope>NUCLEOTIDE SEQUENCE [LARGE SCALE GENOMIC DNA]</scope>
    <source>
        <strain>K12 / MG1655 / ATCC 47076</strain>
    </source>
</reference>
<reference key="3">
    <citation type="journal article" date="1997" name="Science">
        <title>The complete genome sequence of Escherichia coli K-12.</title>
        <authorList>
            <person name="Blattner F.R."/>
            <person name="Plunkett G. III"/>
            <person name="Bloch C.A."/>
            <person name="Perna N.T."/>
            <person name="Burland V."/>
            <person name="Riley M."/>
            <person name="Collado-Vides J."/>
            <person name="Glasner J.D."/>
            <person name="Rode C.K."/>
            <person name="Mayhew G.F."/>
            <person name="Gregor J."/>
            <person name="Davis N.W."/>
            <person name="Kirkpatrick H.A."/>
            <person name="Goeden M.A."/>
            <person name="Rose D.J."/>
            <person name="Mau B."/>
            <person name="Shao Y."/>
        </authorList>
    </citation>
    <scope>NUCLEOTIDE SEQUENCE [LARGE SCALE GENOMIC DNA]</scope>
    <source>
        <strain>K12 / MG1655 / ATCC 47076</strain>
    </source>
</reference>
<reference key="4">
    <citation type="journal article" date="2006" name="Mol. Syst. Biol.">
        <title>Highly accurate genome sequences of Escherichia coli K-12 strains MG1655 and W3110.</title>
        <authorList>
            <person name="Hayashi K."/>
            <person name="Morooka N."/>
            <person name="Yamamoto Y."/>
            <person name="Fujita K."/>
            <person name="Isono K."/>
            <person name="Choi S."/>
            <person name="Ohtsubo E."/>
            <person name="Baba T."/>
            <person name="Wanner B.L."/>
            <person name="Mori H."/>
            <person name="Horiuchi T."/>
        </authorList>
    </citation>
    <scope>NUCLEOTIDE SEQUENCE [LARGE SCALE GENOMIC DNA]</scope>
    <source>
        <strain>K12 / W3110 / ATCC 27325 / DSM 5911</strain>
    </source>
</reference>
<accession>P77174</accession>
<gene>
    <name type="primary">ybdM</name>
    <name type="ordered locus">b0601</name>
    <name type="ordered locus">JW0594</name>
</gene>
<feature type="chain" id="PRO_0000168671" description="Uncharacterized protein YbdM">
    <location>
        <begin position="1"/>
        <end position="209"/>
    </location>
</feature>
<organism>
    <name type="scientific">Escherichia coli (strain K12)</name>
    <dbReference type="NCBI Taxonomy" id="83333"/>
    <lineage>
        <taxon>Bacteria</taxon>
        <taxon>Pseudomonadati</taxon>
        <taxon>Pseudomonadota</taxon>
        <taxon>Gammaproteobacteria</taxon>
        <taxon>Enterobacterales</taxon>
        <taxon>Enterobacteriaceae</taxon>
        <taxon>Escherichia</taxon>
    </lineage>
</organism>
<comment type="interaction">
    <interactant intactId="EBI-1118992">
        <id>P77174</id>
    </interactant>
    <interactant intactId="EBI-553769">
        <id>P0AFW4</id>
        <label>rnk</label>
    </interactant>
    <organismsDiffer>false</organismsDiffer>
    <experiments>5</experiments>
</comment>
<keyword id="KW-1185">Reference proteome</keyword>
<sequence>MGDTMQQRLTQDLTQFLASLPEDDRIKAINEIRMAIHQVSPFREEPVDCVLWVKNSQLMPNDYNPNNVAPPEKKLLQKSIEIDGFTQPIVVTHTDKNAMEIVDGFHRHEIGKGSSSLKLRLKGYLPVTCLEGTRNQRIAATIRHNRARGRHQITAMSEIVRELSQLGWDDNKIGKELGMDSDEVLRLKQINGLQELFADRQYSRAWTVK</sequence>
<dbReference type="EMBL" id="U82598">
    <property type="protein sequence ID" value="AAB40802.1"/>
    <property type="molecule type" value="Genomic_DNA"/>
</dbReference>
<dbReference type="EMBL" id="U00096">
    <property type="protein sequence ID" value="AAC73702.1"/>
    <property type="molecule type" value="Genomic_DNA"/>
</dbReference>
<dbReference type="EMBL" id="AP009048">
    <property type="protein sequence ID" value="BAA35231.2"/>
    <property type="molecule type" value="Genomic_DNA"/>
</dbReference>
<dbReference type="PIR" id="G64793">
    <property type="entry name" value="G64793"/>
</dbReference>
<dbReference type="RefSeq" id="NP_415134.1">
    <property type="nucleotide sequence ID" value="NC_000913.3"/>
</dbReference>
<dbReference type="RefSeq" id="WP_000502945.1">
    <property type="nucleotide sequence ID" value="NZ_SSZK01000032.1"/>
</dbReference>
<dbReference type="SMR" id="P77174"/>
<dbReference type="BioGRID" id="4260902">
    <property type="interactions" value="22"/>
</dbReference>
<dbReference type="BioGRID" id="849591">
    <property type="interactions" value="27"/>
</dbReference>
<dbReference type="FunCoup" id="P77174">
    <property type="interactions" value="27"/>
</dbReference>
<dbReference type="IntAct" id="P77174">
    <property type="interactions" value="32"/>
</dbReference>
<dbReference type="STRING" id="511145.b0601"/>
<dbReference type="PaxDb" id="511145-b0601"/>
<dbReference type="EnsemblBacteria" id="AAC73702">
    <property type="protein sequence ID" value="AAC73702"/>
    <property type="gene ID" value="b0601"/>
</dbReference>
<dbReference type="GeneID" id="945206"/>
<dbReference type="KEGG" id="ecj:JW0594"/>
<dbReference type="KEGG" id="eco:b0601"/>
<dbReference type="PATRIC" id="fig|511145.12.peg.630"/>
<dbReference type="EchoBASE" id="EB3303"/>
<dbReference type="eggNOG" id="COG1475">
    <property type="taxonomic scope" value="Bacteria"/>
</dbReference>
<dbReference type="HOGENOM" id="CLU_105812_0_0_6"/>
<dbReference type="InParanoid" id="P77174"/>
<dbReference type="OMA" id="FSQAWTV"/>
<dbReference type="OrthoDB" id="4536617at2"/>
<dbReference type="PhylomeDB" id="P77174"/>
<dbReference type="BioCyc" id="EcoCyc:G6330-MONOMER"/>
<dbReference type="PRO" id="PR:P77174"/>
<dbReference type="Proteomes" id="UP000000625">
    <property type="component" value="Chromosome"/>
</dbReference>
<dbReference type="GO" id="GO:0071453">
    <property type="term" value="P:cellular response to oxygen levels"/>
    <property type="evidence" value="ECO:0000318"/>
    <property type="project" value="GO_Central"/>
</dbReference>
<dbReference type="CDD" id="cd16397">
    <property type="entry name" value="IbrB_like"/>
    <property type="match status" value="1"/>
</dbReference>
<dbReference type="Gene3D" id="3.90.1530.10">
    <property type="entry name" value="Conserved hypothetical protein from pyrococcus furiosus pfu- 392566-001, ParB domain"/>
    <property type="match status" value="1"/>
</dbReference>
<dbReference type="InterPro" id="IPR003115">
    <property type="entry name" value="ParB/Sulfiredoxin_dom"/>
</dbReference>
<dbReference type="InterPro" id="IPR036086">
    <property type="entry name" value="ParB/Sulfiredoxin_sf"/>
</dbReference>
<dbReference type="PANTHER" id="PTHR30083:SF1">
    <property type="entry name" value="TRANSCRIPTIONAL REGULATOR"/>
    <property type="match status" value="1"/>
</dbReference>
<dbReference type="PANTHER" id="PTHR30083">
    <property type="entry name" value="TRANSCRIPTIONAL REGULATOR-RELATED"/>
    <property type="match status" value="1"/>
</dbReference>
<dbReference type="Pfam" id="PF02195">
    <property type="entry name" value="ParBc"/>
    <property type="match status" value="1"/>
</dbReference>
<dbReference type="SMART" id="SM00470">
    <property type="entry name" value="ParB"/>
    <property type="match status" value="1"/>
</dbReference>
<dbReference type="SUPFAM" id="SSF110849">
    <property type="entry name" value="ParB/Sulfiredoxin"/>
    <property type="match status" value="1"/>
</dbReference>
<name>YBDM_ECOLI</name>